<sequence>MASTEIMTINMGPQHPSTHGVLRLIVELDGEIIQKVTPHIGYLHRGIEKLSEHRTYHQTIPLTDRLDYLAPMSNNLGYVLAVEKLLGIDVPERAQVIRVIMAELTRLKSHLVWIACHALDIGAMTVFLYAFRERENIMDIYEMVSGARMTSNFFRVGGLSKDIPEGFTAAVREVLDTFPGHFDTYEGLLTKNTIWLQRTIGNGVISAEDAIDYGITGPALRGSGVDWDLRRDNPYSGYEKYDFKVPVGENCDTFDRYKVRLVEMRESVKIIRQALDSLKPGPVLADEPQICYPPKENVYNSIEGLIHHFKIASEGFSTPEGEVYQSVEAPKGELGYYLVSDGSTKPYRMRIRPPSFVNLQAIEKMAKGAMIADLVAVIGTLDIVLGEIDR</sequence>
<feature type="chain" id="PRO_0000357825" description="NADH-quinone oxidoreductase subunit D">
    <location>
        <begin position="1"/>
        <end position="390"/>
    </location>
</feature>
<comment type="function">
    <text evidence="1">NDH-1 shuttles electrons from NADH, via FMN and iron-sulfur (Fe-S) centers, to quinones in the respiratory chain. The immediate electron acceptor for the enzyme in this species is believed to be ubiquinone. Couples the redox reaction to proton translocation (for every two electrons transferred, four hydrogen ions are translocated across the cytoplasmic membrane), and thus conserves the redox energy in a proton gradient.</text>
</comment>
<comment type="catalytic activity">
    <reaction evidence="1">
        <text>a quinone + NADH + 5 H(+)(in) = a quinol + NAD(+) + 4 H(+)(out)</text>
        <dbReference type="Rhea" id="RHEA:57888"/>
        <dbReference type="ChEBI" id="CHEBI:15378"/>
        <dbReference type="ChEBI" id="CHEBI:24646"/>
        <dbReference type="ChEBI" id="CHEBI:57540"/>
        <dbReference type="ChEBI" id="CHEBI:57945"/>
        <dbReference type="ChEBI" id="CHEBI:132124"/>
    </reaction>
</comment>
<comment type="subunit">
    <text evidence="1">NDH-1 is composed of 14 different subunits. Subunits NuoB, C, D, E, F, and G constitute the peripheral sector of the complex.</text>
</comment>
<comment type="subcellular location">
    <subcellularLocation>
        <location evidence="1">Cell inner membrane</location>
        <topology evidence="1">Peripheral membrane protein</topology>
        <orientation evidence="1">Cytoplasmic side</orientation>
    </subcellularLocation>
</comment>
<comment type="similarity">
    <text evidence="1">Belongs to the complex I 49 kDa subunit family.</text>
</comment>
<keyword id="KW-0997">Cell inner membrane</keyword>
<keyword id="KW-1003">Cell membrane</keyword>
<keyword id="KW-0472">Membrane</keyword>
<keyword id="KW-0520">NAD</keyword>
<keyword id="KW-0874">Quinone</keyword>
<keyword id="KW-1185">Reference proteome</keyword>
<keyword id="KW-1278">Translocase</keyword>
<keyword id="KW-0813">Transport</keyword>
<keyword id="KW-0830">Ubiquinone</keyword>
<reference key="1">
    <citation type="submission" date="2007-05" db="EMBL/GenBank/DDBJ databases">
        <title>Complete sequence of Geobacter uraniireducens Rf4.</title>
        <authorList>
            <consortium name="US DOE Joint Genome Institute"/>
            <person name="Copeland A."/>
            <person name="Lucas S."/>
            <person name="Lapidus A."/>
            <person name="Barry K."/>
            <person name="Detter J.C."/>
            <person name="Glavina del Rio T."/>
            <person name="Hammon N."/>
            <person name="Israni S."/>
            <person name="Dalin E."/>
            <person name="Tice H."/>
            <person name="Pitluck S."/>
            <person name="Chertkov O."/>
            <person name="Brettin T."/>
            <person name="Bruce D."/>
            <person name="Han C."/>
            <person name="Schmutz J."/>
            <person name="Larimer F."/>
            <person name="Land M."/>
            <person name="Hauser L."/>
            <person name="Kyrpides N."/>
            <person name="Mikhailova N."/>
            <person name="Shelobolina E."/>
            <person name="Aklujkar M."/>
            <person name="Lovley D."/>
            <person name="Richardson P."/>
        </authorList>
    </citation>
    <scope>NUCLEOTIDE SEQUENCE [LARGE SCALE GENOMIC DNA]</scope>
    <source>
        <strain>ATCC BAA-1134 / JCM 13001 / Rf4</strain>
    </source>
</reference>
<gene>
    <name evidence="1" type="primary">nuoD</name>
    <name type="ordered locus">Gura_4241</name>
</gene>
<evidence type="ECO:0000255" key="1">
    <source>
        <dbReference type="HAMAP-Rule" id="MF_01358"/>
    </source>
</evidence>
<accession>A5G9B6</accession>
<protein>
    <recommendedName>
        <fullName evidence="1">NADH-quinone oxidoreductase subunit D</fullName>
        <ecNumber evidence="1">7.1.1.-</ecNumber>
    </recommendedName>
    <alternativeName>
        <fullName evidence="1">NADH dehydrogenase I subunit D</fullName>
    </alternativeName>
    <alternativeName>
        <fullName evidence="1">NDH-1 subunit D</fullName>
    </alternativeName>
</protein>
<organism>
    <name type="scientific">Geotalea uraniireducens (strain Rf4)</name>
    <name type="common">Geobacter uraniireducens</name>
    <dbReference type="NCBI Taxonomy" id="351605"/>
    <lineage>
        <taxon>Bacteria</taxon>
        <taxon>Pseudomonadati</taxon>
        <taxon>Thermodesulfobacteriota</taxon>
        <taxon>Desulfuromonadia</taxon>
        <taxon>Geobacterales</taxon>
        <taxon>Geobacteraceae</taxon>
        <taxon>Geotalea</taxon>
    </lineage>
</organism>
<proteinExistence type="inferred from homology"/>
<name>NUOD_GEOUR</name>
<dbReference type="EC" id="7.1.1.-" evidence="1"/>
<dbReference type="EMBL" id="CP000698">
    <property type="protein sequence ID" value="ABQ28384.1"/>
    <property type="molecule type" value="Genomic_DNA"/>
</dbReference>
<dbReference type="RefSeq" id="WP_011941015.1">
    <property type="nucleotide sequence ID" value="NC_009483.1"/>
</dbReference>
<dbReference type="SMR" id="A5G9B6"/>
<dbReference type="STRING" id="351605.Gura_4241"/>
<dbReference type="KEGG" id="gur:Gura_4241"/>
<dbReference type="HOGENOM" id="CLU_015134_1_2_7"/>
<dbReference type="OrthoDB" id="9801496at2"/>
<dbReference type="Proteomes" id="UP000006695">
    <property type="component" value="Chromosome"/>
</dbReference>
<dbReference type="GO" id="GO:0005886">
    <property type="term" value="C:plasma membrane"/>
    <property type="evidence" value="ECO:0007669"/>
    <property type="project" value="UniProtKB-SubCell"/>
</dbReference>
<dbReference type="GO" id="GO:0051287">
    <property type="term" value="F:NAD binding"/>
    <property type="evidence" value="ECO:0007669"/>
    <property type="project" value="InterPro"/>
</dbReference>
<dbReference type="GO" id="GO:0050136">
    <property type="term" value="F:NADH:ubiquinone reductase (non-electrogenic) activity"/>
    <property type="evidence" value="ECO:0007669"/>
    <property type="project" value="UniProtKB-UniRule"/>
</dbReference>
<dbReference type="GO" id="GO:0048038">
    <property type="term" value="F:quinone binding"/>
    <property type="evidence" value="ECO:0007669"/>
    <property type="project" value="UniProtKB-KW"/>
</dbReference>
<dbReference type="FunFam" id="1.10.645.10:FF:000005">
    <property type="entry name" value="NADH-quinone oxidoreductase subunit D"/>
    <property type="match status" value="1"/>
</dbReference>
<dbReference type="Gene3D" id="1.10.645.10">
    <property type="entry name" value="Cytochrome-c3 Hydrogenase, chain B"/>
    <property type="match status" value="1"/>
</dbReference>
<dbReference type="HAMAP" id="MF_01358">
    <property type="entry name" value="NDH1_NuoD"/>
    <property type="match status" value="1"/>
</dbReference>
<dbReference type="InterPro" id="IPR001135">
    <property type="entry name" value="NADH_Q_OxRdtase_suD"/>
</dbReference>
<dbReference type="InterPro" id="IPR014029">
    <property type="entry name" value="NADH_UbQ_OxRdtase_49kDa_CS"/>
</dbReference>
<dbReference type="InterPro" id="IPR022885">
    <property type="entry name" value="NDH1_su_D/H"/>
</dbReference>
<dbReference type="InterPro" id="IPR029014">
    <property type="entry name" value="NiFe-Hase_large"/>
</dbReference>
<dbReference type="NCBIfam" id="TIGR01962">
    <property type="entry name" value="NuoD"/>
    <property type="match status" value="1"/>
</dbReference>
<dbReference type="NCBIfam" id="NF004739">
    <property type="entry name" value="PRK06075.1"/>
    <property type="match status" value="1"/>
</dbReference>
<dbReference type="PANTHER" id="PTHR11993:SF10">
    <property type="entry name" value="NADH DEHYDROGENASE [UBIQUINONE] IRON-SULFUR PROTEIN 2, MITOCHONDRIAL"/>
    <property type="match status" value="1"/>
</dbReference>
<dbReference type="PANTHER" id="PTHR11993">
    <property type="entry name" value="NADH-UBIQUINONE OXIDOREDUCTASE 49 KDA SUBUNIT"/>
    <property type="match status" value="1"/>
</dbReference>
<dbReference type="Pfam" id="PF00346">
    <property type="entry name" value="Complex1_49kDa"/>
    <property type="match status" value="1"/>
</dbReference>
<dbReference type="SUPFAM" id="SSF56762">
    <property type="entry name" value="HydB/Nqo4-like"/>
    <property type="match status" value="1"/>
</dbReference>
<dbReference type="PROSITE" id="PS00535">
    <property type="entry name" value="COMPLEX1_49K"/>
    <property type="match status" value="1"/>
</dbReference>